<protein>
    <recommendedName>
        <fullName evidence="1">ATP synthase epsilon chain</fullName>
    </recommendedName>
    <alternativeName>
        <fullName evidence="1">ATP synthase F1 sector epsilon subunit</fullName>
    </alternativeName>
    <alternativeName>
        <fullName evidence="1">F-ATPase epsilon subunit</fullName>
    </alternativeName>
</protein>
<gene>
    <name evidence="1" type="primary">atpC</name>
    <name type="ordered locus">SbBS512_E4190</name>
</gene>
<evidence type="ECO:0000255" key="1">
    <source>
        <dbReference type="HAMAP-Rule" id="MF_00530"/>
    </source>
</evidence>
<feature type="chain" id="PRO_1000127892" description="ATP synthase epsilon chain">
    <location>
        <begin position="1"/>
        <end position="139"/>
    </location>
</feature>
<name>ATPE_SHIB3</name>
<sequence>MAMTYHLDVVSAEQQMFSGLVEKIQVTGSEGELGIYPGHAPLLTAIKPGMIRIVKQHGHEEFIYLSGGILEVQSGNVTVLADTAIRGQDLDEARAMEAKRKAEEHISSSHGDVDYAQASAELAKAIAQLRVIELTKKAM</sequence>
<keyword id="KW-0066">ATP synthesis</keyword>
<keyword id="KW-0997">Cell inner membrane</keyword>
<keyword id="KW-1003">Cell membrane</keyword>
<keyword id="KW-0139">CF(1)</keyword>
<keyword id="KW-0375">Hydrogen ion transport</keyword>
<keyword id="KW-0406">Ion transport</keyword>
<keyword id="KW-0472">Membrane</keyword>
<keyword id="KW-1185">Reference proteome</keyword>
<keyword id="KW-0813">Transport</keyword>
<accession>B2TUP4</accession>
<comment type="function">
    <text evidence="1">Produces ATP from ADP in the presence of a proton gradient across the membrane.</text>
</comment>
<comment type="subunit">
    <text evidence="1">F-type ATPases have 2 components, CF(1) - the catalytic core - and CF(0) - the membrane proton channel. CF(1) has five subunits: alpha(3), beta(3), gamma(1), delta(1), epsilon(1). CF(0) has three main subunits: a, b and c.</text>
</comment>
<comment type="subcellular location">
    <subcellularLocation>
        <location evidence="1">Cell inner membrane</location>
        <topology evidence="1">Peripheral membrane protein</topology>
    </subcellularLocation>
</comment>
<comment type="similarity">
    <text evidence="1">Belongs to the ATPase epsilon chain family.</text>
</comment>
<proteinExistence type="inferred from homology"/>
<reference key="1">
    <citation type="submission" date="2008-05" db="EMBL/GenBank/DDBJ databases">
        <title>Complete sequence of Shigella boydii serotype 18 strain BS512.</title>
        <authorList>
            <person name="Rasko D.A."/>
            <person name="Rosovitz M."/>
            <person name="Maurelli A.T."/>
            <person name="Myers G."/>
            <person name="Seshadri R."/>
            <person name="Cer R."/>
            <person name="Jiang L."/>
            <person name="Ravel J."/>
            <person name="Sebastian Y."/>
        </authorList>
    </citation>
    <scope>NUCLEOTIDE SEQUENCE [LARGE SCALE GENOMIC DNA]</scope>
    <source>
        <strain>CDC 3083-94 / BS512</strain>
    </source>
</reference>
<dbReference type="EMBL" id="CP001063">
    <property type="protein sequence ID" value="ACD08887.1"/>
    <property type="molecule type" value="Genomic_DNA"/>
</dbReference>
<dbReference type="RefSeq" id="WP_001251973.1">
    <property type="nucleotide sequence ID" value="NC_010658.1"/>
</dbReference>
<dbReference type="SMR" id="B2TUP4"/>
<dbReference type="STRING" id="344609.SbBS512_E4190"/>
<dbReference type="KEGG" id="sbc:SbBS512_E4190"/>
<dbReference type="HOGENOM" id="CLU_084338_2_0_6"/>
<dbReference type="Proteomes" id="UP000001030">
    <property type="component" value="Chromosome"/>
</dbReference>
<dbReference type="GO" id="GO:0005886">
    <property type="term" value="C:plasma membrane"/>
    <property type="evidence" value="ECO:0007669"/>
    <property type="project" value="UniProtKB-SubCell"/>
</dbReference>
<dbReference type="GO" id="GO:0045259">
    <property type="term" value="C:proton-transporting ATP synthase complex"/>
    <property type="evidence" value="ECO:0007669"/>
    <property type="project" value="UniProtKB-KW"/>
</dbReference>
<dbReference type="GO" id="GO:0005524">
    <property type="term" value="F:ATP binding"/>
    <property type="evidence" value="ECO:0007669"/>
    <property type="project" value="UniProtKB-UniRule"/>
</dbReference>
<dbReference type="GO" id="GO:0046933">
    <property type="term" value="F:proton-transporting ATP synthase activity, rotational mechanism"/>
    <property type="evidence" value="ECO:0007669"/>
    <property type="project" value="UniProtKB-UniRule"/>
</dbReference>
<dbReference type="CDD" id="cd12152">
    <property type="entry name" value="F1-ATPase_delta"/>
    <property type="match status" value="1"/>
</dbReference>
<dbReference type="FunFam" id="1.20.5.440:FF:000001">
    <property type="entry name" value="ATP synthase epsilon chain"/>
    <property type="match status" value="1"/>
</dbReference>
<dbReference type="FunFam" id="2.60.15.10:FF:000001">
    <property type="entry name" value="ATP synthase epsilon chain"/>
    <property type="match status" value="1"/>
</dbReference>
<dbReference type="Gene3D" id="1.20.5.440">
    <property type="entry name" value="ATP synthase delta/epsilon subunit, C-terminal domain"/>
    <property type="match status" value="1"/>
</dbReference>
<dbReference type="Gene3D" id="2.60.15.10">
    <property type="entry name" value="F0F1 ATP synthase delta/epsilon subunit, N-terminal"/>
    <property type="match status" value="1"/>
</dbReference>
<dbReference type="HAMAP" id="MF_00530">
    <property type="entry name" value="ATP_synth_epsil_bac"/>
    <property type="match status" value="1"/>
</dbReference>
<dbReference type="InterPro" id="IPR036794">
    <property type="entry name" value="ATP_F1_dsu/esu_C_sf"/>
</dbReference>
<dbReference type="InterPro" id="IPR001469">
    <property type="entry name" value="ATP_synth_F1_dsu/esu"/>
</dbReference>
<dbReference type="InterPro" id="IPR020546">
    <property type="entry name" value="ATP_synth_F1_dsu/esu_N"/>
</dbReference>
<dbReference type="InterPro" id="IPR020547">
    <property type="entry name" value="ATP_synth_F1_esu_C"/>
</dbReference>
<dbReference type="InterPro" id="IPR036771">
    <property type="entry name" value="ATPsynth_dsu/esu_N"/>
</dbReference>
<dbReference type="NCBIfam" id="TIGR01216">
    <property type="entry name" value="ATP_synt_epsi"/>
    <property type="match status" value="1"/>
</dbReference>
<dbReference type="NCBIfam" id="NF001847">
    <property type="entry name" value="PRK00571.1-4"/>
    <property type="match status" value="1"/>
</dbReference>
<dbReference type="PANTHER" id="PTHR13822">
    <property type="entry name" value="ATP SYNTHASE DELTA/EPSILON CHAIN"/>
    <property type="match status" value="1"/>
</dbReference>
<dbReference type="PANTHER" id="PTHR13822:SF10">
    <property type="entry name" value="ATP SYNTHASE EPSILON CHAIN, CHLOROPLASTIC"/>
    <property type="match status" value="1"/>
</dbReference>
<dbReference type="Pfam" id="PF00401">
    <property type="entry name" value="ATP-synt_DE"/>
    <property type="match status" value="1"/>
</dbReference>
<dbReference type="Pfam" id="PF02823">
    <property type="entry name" value="ATP-synt_DE_N"/>
    <property type="match status" value="1"/>
</dbReference>
<dbReference type="SUPFAM" id="SSF46604">
    <property type="entry name" value="Epsilon subunit of F1F0-ATP synthase C-terminal domain"/>
    <property type="match status" value="1"/>
</dbReference>
<dbReference type="SUPFAM" id="SSF51344">
    <property type="entry name" value="Epsilon subunit of F1F0-ATP synthase N-terminal domain"/>
    <property type="match status" value="1"/>
</dbReference>
<organism>
    <name type="scientific">Shigella boydii serotype 18 (strain CDC 3083-94 / BS512)</name>
    <dbReference type="NCBI Taxonomy" id="344609"/>
    <lineage>
        <taxon>Bacteria</taxon>
        <taxon>Pseudomonadati</taxon>
        <taxon>Pseudomonadota</taxon>
        <taxon>Gammaproteobacteria</taxon>
        <taxon>Enterobacterales</taxon>
        <taxon>Enterobacteriaceae</taxon>
        <taxon>Shigella</taxon>
    </lineage>
</organism>